<keyword id="KW-0106">Calcium</keyword>
<keyword id="KW-0903">Direct protein sequencing</keyword>
<keyword id="KW-1015">Disulfide bond</keyword>
<keyword id="KW-0378">Hydrolase</keyword>
<keyword id="KW-0442">Lipid degradation</keyword>
<keyword id="KW-0443">Lipid metabolism</keyword>
<keyword id="KW-0479">Metal-binding</keyword>
<keyword id="KW-0964">Secreted</keyword>
<keyword id="KW-0732">Signal</keyword>
<keyword id="KW-0800">Toxin</keyword>
<name>PA2AD_NAJSP</name>
<comment type="function">
    <text evidence="1">PLA2 catalyzes the calcium-dependent hydrolysis of the 2-acyl groups in 3-sn-phosphoglycerides.</text>
</comment>
<comment type="catalytic activity">
    <reaction evidence="3 4">
        <text>a 1,2-diacyl-sn-glycero-3-phosphocholine + H2O = a 1-acyl-sn-glycero-3-phosphocholine + a fatty acid + H(+)</text>
        <dbReference type="Rhea" id="RHEA:15801"/>
        <dbReference type="ChEBI" id="CHEBI:15377"/>
        <dbReference type="ChEBI" id="CHEBI:15378"/>
        <dbReference type="ChEBI" id="CHEBI:28868"/>
        <dbReference type="ChEBI" id="CHEBI:57643"/>
        <dbReference type="ChEBI" id="CHEBI:58168"/>
        <dbReference type="EC" id="3.1.1.4"/>
    </reaction>
</comment>
<comment type="cofactor">
    <cofactor evidence="1">
        <name>Ca(2+)</name>
        <dbReference type="ChEBI" id="CHEBI:29108"/>
    </cofactor>
    <text evidence="1">Binds 1 Ca(2+) ion.</text>
</comment>
<comment type="subcellular location">
    <subcellularLocation>
        <location>Secreted</location>
    </subcellularLocation>
</comment>
<comment type="tissue specificity">
    <text>Expressed by the venom gland.</text>
</comment>
<comment type="similarity">
    <text evidence="5">Belongs to the phospholipase A2 family. Group I subfamily. D49 sub-subfamily.</text>
</comment>
<proteinExistence type="evidence at protein level"/>
<organism>
    <name type="scientific">Naja sputatrix</name>
    <name type="common">Malayan spitting cobra</name>
    <name type="synonym">Naja naja sputatrix</name>
    <dbReference type="NCBI Taxonomy" id="33626"/>
    <lineage>
        <taxon>Eukaryota</taxon>
        <taxon>Metazoa</taxon>
        <taxon>Chordata</taxon>
        <taxon>Craniata</taxon>
        <taxon>Vertebrata</taxon>
        <taxon>Euteleostomi</taxon>
        <taxon>Lepidosauria</taxon>
        <taxon>Squamata</taxon>
        <taxon>Bifurcata</taxon>
        <taxon>Unidentata</taxon>
        <taxon>Episquamata</taxon>
        <taxon>Toxicofera</taxon>
        <taxon>Serpentes</taxon>
        <taxon>Colubroidea</taxon>
        <taxon>Elapidae</taxon>
        <taxon>Elapinae</taxon>
        <taxon>Naja</taxon>
    </lineage>
</organism>
<evidence type="ECO:0000250" key="1"/>
<evidence type="ECO:0000255" key="2"/>
<evidence type="ECO:0000255" key="3">
    <source>
        <dbReference type="PROSITE-ProRule" id="PRU10035"/>
    </source>
</evidence>
<evidence type="ECO:0000255" key="4">
    <source>
        <dbReference type="PROSITE-ProRule" id="PRU10036"/>
    </source>
</evidence>
<evidence type="ECO:0000305" key="5"/>
<reference key="1">
    <citation type="journal article" date="2000" name="Mol. Biol. Evol.">
        <title>Structure and phylogeny of the venom group I phospholipase A(2) gene.</title>
        <authorList>
            <person name="Jeyaseelan K."/>
            <person name="Armugam A."/>
            <person name="Donghui M."/>
            <person name="Tan N.-H."/>
        </authorList>
    </citation>
    <scope>NUCLEOTIDE SEQUENCE [GENOMIC DNA]</scope>
    <source>
        <tissue>Liver</tissue>
    </source>
</reference>
<reference key="2">
    <citation type="journal article" date="1997" name="Toxicon">
        <title>Cloning and characterization of cDNAs encoding three isoforms of phospholipase A2 in Malayan spitting cobra (Naja naja sputatrix) venom.</title>
        <authorList>
            <person name="Armugam A."/>
            <person name="Earnest L."/>
            <person name="Chung M.C.M."/>
            <person name="Gopalakrishnakone P."/>
            <person name="Tan C.H."/>
            <person name="Tan N.-H."/>
            <person name="Jeyaseelan K."/>
        </authorList>
    </citation>
    <scope>PROTEIN SEQUENCE OF 28-49</scope>
    <source>
        <tissue>Venom</tissue>
    </source>
</reference>
<protein>
    <recommendedName>
        <fullName>Acidic phospholipase A2 D</fullName>
        <shortName>svPLA2</shortName>
        <ecNumber>3.1.1.4</ecNumber>
    </recommendedName>
    <alternativeName>
        <fullName>APLA</fullName>
    </alternativeName>
    <alternativeName>
        <fullName>Phosphatidylcholine 2-acylhydrolase</fullName>
    </alternativeName>
</protein>
<sequence length="146" mass="16097">MNPAHLLILAAVCVSPLGASSNRPMPLNLYQFKNMIQCTVPNRSWWDFADYGCYCGRGGSGTPVDDLDRCCQVHDNCYGEAEKISRCWPYFKTYSYECSQGTLTCKGGNDACAAAVCDCDRLAAICFAGAPYNDNNYNIDLKARCQ</sequence>
<feature type="signal peptide" evidence="2">
    <location>
        <begin position="1"/>
        <end position="21"/>
    </location>
</feature>
<feature type="propeptide" id="PRO_0000022936" evidence="1">
    <location>
        <begin position="22"/>
        <end position="27"/>
    </location>
</feature>
<feature type="chain" id="PRO_0000022937" description="Acidic phospholipase A2 D">
    <location>
        <begin position="28"/>
        <end position="146"/>
    </location>
</feature>
<feature type="active site" evidence="1">
    <location>
        <position position="74"/>
    </location>
</feature>
<feature type="active site" evidence="1">
    <location>
        <position position="120"/>
    </location>
</feature>
<feature type="binding site" evidence="1">
    <location>
        <position position="54"/>
    </location>
    <ligand>
        <name>Ca(2+)</name>
        <dbReference type="ChEBI" id="CHEBI:29108"/>
    </ligand>
</feature>
<feature type="binding site" evidence="1">
    <location>
        <position position="56"/>
    </location>
    <ligand>
        <name>Ca(2+)</name>
        <dbReference type="ChEBI" id="CHEBI:29108"/>
    </ligand>
</feature>
<feature type="binding site" evidence="1">
    <location>
        <position position="58"/>
    </location>
    <ligand>
        <name>Ca(2+)</name>
        <dbReference type="ChEBI" id="CHEBI:29108"/>
    </ligand>
</feature>
<feature type="binding site" evidence="1">
    <location>
        <position position="75"/>
    </location>
    <ligand>
        <name>Ca(2+)</name>
        <dbReference type="ChEBI" id="CHEBI:29108"/>
    </ligand>
</feature>
<feature type="disulfide bond" evidence="1">
    <location>
        <begin position="38"/>
        <end position="98"/>
    </location>
</feature>
<feature type="disulfide bond" evidence="1">
    <location>
        <begin position="53"/>
        <end position="145"/>
    </location>
</feature>
<feature type="disulfide bond" evidence="1">
    <location>
        <begin position="55"/>
        <end position="71"/>
    </location>
</feature>
<feature type="disulfide bond" evidence="1">
    <location>
        <begin position="70"/>
        <end position="126"/>
    </location>
</feature>
<feature type="disulfide bond" evidence="1">
    <location>
        <begin position="77"/>
        <end position="119"/>
    </location>
</feature>
<feature type="disulfide bond" evidence="1">
    <location>
        <begin position="87"/>
        <end position="112"/>
    </location>
</feature>
<feature type="disulfide bond" evidence="1">
    <location>
        <begin position="105"/>
        <end position="117"/>
    </location>
</feature>
<dbReference type="EC" id="3.1.1.4"/>
<dbReference type="EMBL" id="AF101235">
    <property type="protein sequence ID" value="AAF82186.1"/>
    <property type="molecule type" value="Genomic_DNA"/>
</dbReference>
<dbReference type="SMR" id="Q9I900"/>
<dbReference type="GO" id="GO:0005576">
    <property type="term" value="C:extracellular region"/>
    <property type="evidence" value="ECO:0007669"/>
    <property type="project" value="UniProtKB-SubCell"/>
</dbReference>
<dbReference type="GO" id="GO:0005509">
    <property type="term" value="F:calcium ion binding"/>
    <property type="evidence" value="ECO:0007669"/>
    <property type="project" value="InterPro"/>
</dbReference>
<dbReference type="GO" id="GO:0047498">
    <property type="term" value="F:calcium-dependent phospholipase A2 activity"/>
    <property type="evidence" value="ECO:0007669"/>
    <property type="project" value="TreeGrafter"/>
</dbReference>
<dbReference type="GO" id="GO:0005543">
    <property type="term" value="F:phospholipid binding"/>
    <property type="evidence" value="ECO:0007669"/>
    <property type="project" value="TreeGrafter"/>
</dbReference>
<dbReference type="GO" id="GO:0090729">
    <property type="term" value="F:toxin activity"/>
    <property type="evidence" value="ECO:0007669"/>
    <property type="project" value="UniProtKB-KW"/>
</dbReference>
<dbReference type="GO" id="GO:0050482">
    <property type="term" value="P:arachidonate secretion"/>
    <property type="evidence" value="ECO:0007669"/>
    <property type="project" value="InterPro"/>
</dbReference>
<dbReference type="GO" id="GO:0016042">
    <property type="term" value="P:lipid catabolic process"/>
    <property type="evidence" value="ECO:0007669"/>
    <property type="project" value="UniProtKB-KW"/>
</dbReference>
<dbReference type="GO" id="GO:0006644">
    <property type="term" value="P:phospholipid metabolic process"/>
    <property type="evidence" value="ECO:0007669"/>
    <property type="project" value="InterPro"/>
</dbReference>
<dbReference type="CDD" id="cd00125">
    <property type="entry name" value="PLA2c"/>
    <property type="match status" value="1"/>
</dbReference>
<dbReference type="FunFam" id="1.20.90.10:FF:000007">
    <property type="entry name" value="Acidic phospholipase A2"/>
    <property type="match status" value="1"/>
</dbReference>
<dbReference type="Gene3D" id="1.20.90.10">
    <property type="entry name" value="Phospholipase A2 domain"/>
    <property type="match status" value="1"/>
</dbReference>
<dbReference type="InterPro" id="IPR001211">
    <property type="entry name" value="PLipase_A2"/>
</dbReference>
<dbReference type="InterPro" id="IPR033112">
    <property type="entry name" value="PLipase_A2_Asp_AS"/>
</dbReference>
<dbReference type="InterPro" id="IPR016090">
    <property type="entry name" value="PLipase_A2_dom"/>
</dbReference>
<dbReference type="InterPro" id="IPR036444">
    <property type="entry name" value="PLipase_A2_dom_sf"/>
</dbReference>
<dbReference type="InterPro" id="IPR033113">
    <property type="entry name" value="PLipase_A2_His_AS"/>
</dbReference>
<dbReference type="PANTHER" id="PTHR11716:SF94">
    <property type="entry name" value="PHOSPHOLIPASE A2"/>
    <property type="match status" value="1"/>
</dbReference>
<dbReference type="PANTHER" id="PTHR11716">
    <property type="entry name" value="PHOSPHOLIPASE A2 FAMILY MEMBER"/>
    <property type="match status" value="1"/>
</dbReference>
<dbReference type="Pfam" id="PF00068">
    <property type="entry name" value="Phospholip_A2_1"/>
    <property type="match status" value="1"/>
</dbReference>
<dbReference type="PRINTS" id="PR00389">
    <property type="entry name" value="PHPHLIPASEA2"/>
</dbReference>
<dbReference type="SMART" id="SM00085">
    <property type="entry name" value="PA2c"/>
    <property type="match status" value="1"/>
</dbReference>
<dbReference type="SUPFAM" id="SSF48619">
    <property type="entry name" value="Phospholipase A2, PLA2"/>
    <property type="match status" value="1"/>
</dbReference>
<dbReference type="PROSITE" id="PS00119">
    <property type="entry name" value="PA2_ASP"/>
    <property type="match status" value="1"/>
</dbReference>
<dbReference type="PROSITE" id="PS00118">
    <property type="entry name" value="PA2_HIS"/>
    <property type="match status" value="1"/>
</dbReference>
<accession>Q9I900</accession>